<evidence type="ECO:0000255" key="1">
    <source>
        <dbReference type="PROSITE-ProRule" id="PRU00080"/>
    </source>
</evidence>
<dbReference type="EMBL" id="AC006085">
    <property type="protein sequence ID" value="AAD30640.1"/>
    <property type="molecule type" value="Genomic_DNA"/>
</dbReference>
<dbReference type="EMBL" id="CP002684">
    <property type="protein sequence ID" value="AEE32647.1"/>
    <property type="molecule type" value="Genomic_DNA"/>
</dbReference>
<dbReference type="PIR" id="F96550">
    <property type="entry name" value="F96550"/>
</dbReference>
<dbReference type="RefSeq" id="NP_564586.1">
    <property type="nucleotide sequence ID" value="NM_104007.1"/>
</dbReference>
<dbReference type="BioGRID" id="26777">
    <property type="interactions" value="1"/>
</dbReference>
<dbReference type="STRING" id="3702.Q9SYD0"/>
<dbReference type="PaxDb" id="3702-AT1G51290.1"/>
<dbReference type="EnsemblPlants" id="AT1G51290.1">
    <property type="protein sequence ID" value="AT1G51290.1"/>
    <property type="gene ID" value="AT1G51290"/>
</dbReference>
<dbReference type="GeneID" id="841552"/>
<dbReference type="Gramene" id="AT1G51290.1">
    <property type="protein sequence ID" value="AT1G51290.1"/>
    <property type="gene ID" value="AT1G51290"/>
</dbReference>
<dbReference type="KEGG" id="ath:AT1G51290"/>
<dbReference type="Araport" id="AT1G51290"/>
<dbReference type="TAIR" id="AT1G51290"/>
<dbReference type="HOGENOM" id="CLU_034692_2_1_1"/>
<dbReference type="InParanoid" id="Q9SYD0"/>
<dbReference type="OMA" id="WIEVHEL"/>
<dbReference type="PhylomeDB" id="Q9SYD0"/>
<dbReference type="PRO" id="PR:Q9SYD0"/>
<dbReference type="Proteomes" id="UP000006548">
    <property type="component" value="Chromosome 1"/>
</dbReference>
<dbReference type="ExpressionAtlas" id="Q9SYD0">
    <property type="expression patterns" value="baseline and differential"/>
</dbReference>
<dbReference type="CDD" id="cd22157">
    <property type="entry name" value="F-box_AtFBW1-like"/>
    <property type="match status" value="1"/>
</dbReference>
<dbReference type="Gene3D" id="1.20.1280.50">
    <property type="match status" value="1"/>
</dbReference>
<dbReference type="InterPro" id="IPR050233">
    <property type="entry name" value="A_thaliana_F-box"/>
</dbReference>
<dbReference type="InterPro" id="IPR006527">
    <property type="entry name" value="F-box-assoc_dom_typ1"/>
</dbReference>
<dbReference type="InterPro" id="IPR017451">
    <property type="entry name" value="F-box-assoc_interact_dom"/>
</dbReference>
<dbReference type="InterPro" id="IPR036047">
    <property type="entry name" value="F-box-like_dom_sf"/>
</dbReference>
<dbReference type="InterPro" id="IPR001810">
    <property type="entry name" value="F-box_dom"/>
</dbReference>
<dbReference type="NCBIfam" id="TIGR01640">
    <property type="entry name" value="F_box_assoc_1"/>
    <property type="match status" value="1"/>
</dbReference>
<dbReference type="PANTHER" id="PTHR47993:SF181">
    <property type="entry name" value="F-BOX ONLY PROTEIN 10-RELATED"/>
    <property type="match status" value="1"/>
</dbReference>
<dbReference type="PANTHER" id="PTHR47993">
    <property type="entry name" value="OS09G0372900 PROTEIN-RELATED"/>
    <property type="match status" value="1"/>
</dbReference>
<dbReference type="Pfam" id="PF00646">
    <property type="entry name" value="F-box"/>
    <property type="match status" value="1"/>
</dbReference>
<dbReference type="Pfam" id="PF07734">
    <property type="entry name" value="FBA_1"/>
    <property type="match status" value="1"/>
</dbReference>
<dbReference type="SMART" id="SM00256">
    <property type="entry name" value="FBOX"/>
    <property type="match status" value="1"/>
</dbReference>
<dbReference type="SUPFAM" id="SSF81383">
    <property type="entry name" value="F-box domain"/>
    <property type="match status" value="1"/>
</dbReference>
<dbReference type="PROSITE" id="PS50181">
    <property type="entry name" value="FBOX"/>
    <property type="match status" value="1"/>
</dbReference>
<reference key="1">
    <citation type="journal article" date="2000" name="Nature">
        <title>Sequence and analysis of chromosome 1 of the plant Arabidopsis thaliana.</title>
        <authorList>
            <person name="Theologis A."/>
            <person name="Ecker J.R."/>
            <person name="Palm C.J."/>
            <person name="Federspiel N.A."/>
            <person name="Kaul S."/>
            <person name="White O."/>
            <person name="Alonso J."/>
            <person name="Altafi H."/>
            <person name="Araujo R."/>
            <person name="Bowman C.L."/>
            <person name="Brooks S.Y."/>
            <person name="Buehler E."/>
            <person name="Chan A."/>
            <person name="Chao Q."/>
            <person name="Chen H."/>
            <person name="Cheuk R.F."/>
            <person name="Chin C.W."/>
            <person name="Chung M.K."/>
            <person name="Conn L."/>
            <person name="Conway A.B."/>
            <person name="Conway A.R."/>
            <person name="Creasy T.H."/>
            <person name="Dewar K."/>
            <person name="Dunn P."/>
            <person name="Etgu P."/>
            <person name="Feldblyum T.V."/>
            <person name="Feng J.-D."/>
            <person name="Fong B."/>
            <person name="Fujii C.Y."/>
            <person name="Gill J.E."/>
            <person name="Goldsmith A.D."/>
            <person name="Haas B."/>
            <person name="Hansen N.F."/>
            <person name="Hughes B."/>
            <person name="Huizar L."/>
            <person name="Hunter J.L."/>
            <person name="Jenkins J."/>
            <person name="Johnson-Hopson C."/>
            <person name="Khan S."/>
            <person name="Khaykin E."/>
            <person name="Kim C.J."/>
            <person name="Koo H.L."/>
            <person name="Kremenetskaia I."/>
            <person name="Kurtz D.B."/>
            <person name="Kwan A."/>
            <person name="Lam B."/>
            <person name="Langin-Hooper S."/>
            <person name="Lee A."/>
            <person name="Lee J.M."/>
            <person name="Lenz C.A."/>
            <person name="Li J.H."/>
            <person name="Li Y.-P."/>
            <person name="Lin X."/>
            <person name="Liu S.X."/>
            <person name="Liu Z.A."/>
            <person name="Luros J.S."/>
            <person name="Maiti R."/>
            <person name="Marziali A."/>
            <person name="Militscher J."/>
            <person name="Miranda M."/>
            <person name="Nguyen M."/>
            <person name="Nierman W.C."/>
            <person name="Osborne B.I."/>
            <person name="Pai G."/>
            <person name="Peterson J."/>
            <person name="Pham P.K."/>
            <person name="Rizzo M."/>
            <person name="Rooney T."/>
            <person name="Rowley D."/>
            <person name="Sakano H."/>
            <person name="Salzberg S.L."/>
            <person name="Schwartz J.R."/>
            <person name="Shinn P."/>
            <person name="Southwick A.M."/>
            <person name="Sun H."/>
            <person name="Tallon L.J."/>
            <person name="Tambunga G."/>
            <person name="Toriumi M.J."/>
            <person name="Town C.D."/>
            <person name="Utterback T."/>
            <person name="Van Aken S."/>
            <person name="Vaysberg M."/>
            <person name="Vysotskaia V.S."/>
            <person name="Walker M."/>
            <person name="Wu D."/>
            <person name="Yu G."/>
            <person name="Fraser C.M."/>
            <person name="Venter J.C."/>
            <person name="Davis R.W."/>
        </authorList>
    </citation>
    <scope>NUCLEOTIDE SEQUENCE [LARGE SCALE GENOMIC DNA]</scope>
    <source>
        <strain>cv. Columbia</strain>
    </source>
</reference>
<reference key="2">
    <citation type="journal article" date="2017" name="Plant J.">
        <title>Araport11: a complete reannotation of the Arabidopsis thaliana reference genome.</title>
        <authorList>
            <person name="Cheng C.Y."/>
            <person name="Krishnakumar V."/>
            <person name="Chan A.P."/>
            <person name="Thibaud-Nissen F."/>
            <person name="Schobel S."/>
            <person name="Town C.D."/>
        </authorList>
    </citation>
    <scope>GENOME REANNOTATION</scope>
    <source>
        <strain>cv. Columbia</strain>
    </source>
</reference>
<reference key="3">
    <citation type="journal article" date="2000" name="Trends Plant Sci.">
        <title>F-box proteins in Arabidopsis.</title>
        <authorList>
            <person name="Xiao W."/>
            <person name="Jang J.-C."/>
        </authorList>
    </citation>
    <scope>GENE FAMILY</scope>
    <scope>NOMENCLATURE</scope>
</reference>
<protein>
    <recommendedName>
        <fullName>Putative F-box only protein 10</fullName>
    </recommendedName>
</protein>
<feature type="chain" id="PRO_0000273543" description="Putative F-box only protein 10">
    <location>
        <begin position="1"/>
        <end position="377"/>
    </location>
</feature>
<feature type="domain" description="F-box" evidence="1">
    <location>
        <begin position="1"/>
        <end position="46"/>
    </location>
</feature>
<gene>
    <name type="primary">FBX10</name>
    <name type="ordered locus">At1g51290</name>
    <name type="ORF">F11M15.14</name>
</gene>
<organism>
    <name type="scientific">Arabidopsis thaliana</name>
    <name type="common">Mouse-ear cress</name>
    <dbReference type="NCBI Taxonomy" id="3702"/>
    <lineage>
        <taxon>Eukaryota</taxon>
        <taxon>Viridiplantae</taxon>
        <taxon>Streptophyta</taxon>
        <taxon>Embryophyta</taxon>
        <taxon>Tracheophyta</taxon>
        <taxon>Spermatophyta</taxon>
        <taxon>Magnoliopsida</taxon>
        <taxon>eudicotyledons</taxon>
        <taxon>Gunneridae</taxon>
        <taxon>Pentapetalae</taxon>
        <taxon>rosids</taxon>
        <taxon>malvids</taxon>
        <taxon>Brassicales</taxon>
        <taxon>Brassicaceae</taxon>
        <taxon>Camelineae</taxon>
        <taxon>Arabidopsis</taxon>
    </lineage>
</organism>
<keyword id="KW-1185">Reference proteome</keyword>
<accession>Q9SYD0</accession>
<sequence length="377" mass="44620">MVSVNLPWELVEEILYRVPPQSLARFRTVCKQWNSLFDDNKFVNDHLVRSRPQFMFRTDSKMYSVAVNFSGPWIEVHELTLDIPGLNCEMPIWLYNYVDCDGLLFCTSYKFKGVLIWNPWLKQTRLFASNHHYPTKYVIGYDNKKRYKVLDYEFEPSSKLTIYEIGLYSKKVKDLESDSSWSVVQSNSVSLNGTLYWAGVDVNNGIFIRSFSFSTERLTTFCRLPLKYNEDNILALAVFRKDRFSLLKLCNKTSKIKIWLTKNSINNREIGLVEDVVWIKLMTVLIPDFPKLPFRWYNRPDLTYFLDNDDAKRLVICCYDETQQVYIYIVRRNIVKKIKIDLFEDLLDQSSPHLRTYIPSLVRPTQVKEDNNKLYVL</sequence>
<name>FBX10_ARATH</name>
<proteinExistence type="predicted"/>